<feature type="chain" id="PRO_1000117718" description="tRNA uridine 5-carboxymethylaminomethyl modification enzyme MnmG">
    <location>
        <begin position="1"/>
        <end position="629"/>
    </location>
</feature>
<feature type="binding site" evidence="1">
    <location>
        <begin position="13"/>
        <end position="18"/>
    </location>
    <ligand>
        <name>FAD</name>
        <dbReference type="ChEBI" id="CHEBI:57692"/>
    </ligand>
</feature>
<feature type="binding site" evidence="1">
    <location>
        <position position="125"/>
    </location>
    <ligand>
        <name>FAD</name>
        <dbReference type="ChEBI" id="CHEBI:57692"/>
    </ligand>
</feature>
<feature type="binding site" evidence="1">
    <location>
        <position position="180"/>
    </location>
    <ligand>
        <name>FAD</name>
        <dbReference type="ChEBI" id="CHEBI:57692"/>
    </ligand>
</feature>
<feature type="binding site" evidence="1">
    <location>
        <begin position="273"/>
        <end position="287"/>
    </location>
    <ligand>
        <name>NAD(+)</name>
        <dbReference type="ChEBI" id="CHEBI:57540"/>
    </ligand>
</feature>
<feature type="binding site" evidence="1">
    <location>
        <position position="370"/>
    </location>
    <ligand>
        <name>FAD</name>
        <dbReference type="ChEBI" id="CHEBI:57692"/>
    </ligand>
</feature>
<protein>
    <recommendedName>
        <fullName evidence="1">tRNA uridine 5-carboxymethylaminomethyl modification enzyme MnmG</fullName>
    </recommendedName>
    <alternativeName>
        <fullName evidence="1">Glucose-inhibited division protein A</fullName>
    </alternativeName>
</protein>
<sequence>MFYPDPFDVIIIGGGHAGTEAAMAAARMGQQTLLLTHNIDTLGQMSCNPAIGGIGKGHLVKEVDALGGLMAKAIDQAGIQFRILNASKGPAVRATRAQADRVLYRQAVRTALENQPNLMIFQQAVEDLIVENDRVVGAVTQMGLKFRAKAVVLTVGTFLDGKIHIGLDNYSGGRAGDPPSIPLSRRLRELPLRVGRLKTGTPPRIDARTIDFSVLAQQHGDNPMPVFSFMGNASQHPQQVPCYITHTNEKTHDVIRSNLDRSPMYAGVIEGVGPRYCPSIEDKVMRFADRNQHQIFLEPEGLTSNEIYPNGISTSLPFDVQMQIVRSMQGMENAKIVRPGYAIEYDFFDPRDLKPTLESKFIQGLFFAGQINGTTGYEEAAAQGLLAGLNAARLSADKEGWAPARSQAYLGVLVDDLCTLGTKEPYRMFTSRAEYRLMLREDNADLRLTEIGRELGLVDDERWARFNEKLENIERERQRLKSTWVTPSAEAAAEVNAHLTAPLSREASGEDLLRRPEMTYEKLTTLTPFAPALTDEQAAEQVEIQVKYEGYIARQQDEIEKQLRNENTLLPATLDYRQVSGLSNEVIAKLNDHKPASIGQASRISGVTPAAISILLVWLKKQGMLRRSA</sequence>
<comment type="function">
    <text evidence="1">NAD-binding protein involved in the addition of a carboxymethylaminomethyl (cmnm) group at the wobble position (U34) of certain tRNAs, forming tRNA-cmnm(5)s(2)U34.</text>
</comment>
<comment type="cofactor">
    <cofactor evidence="1">
        <name>FAD</name>
        <dbReference type="ChEBI" id="CHEBI:57692"/>
    </cofactor>
</comment>
<comment type="subunit">
    <text evidence="1">Homodimer. Heterotetramer of two MnmE and two MnmG subunits.</text>
</comment>
<comment type="subcellular location">
    <subcellularLocation>
        <location evidence="1">Cytoplasm</location>
    </subcellularLocation>
</comment>
<comment type="similarity">
    <text evidence="1">Belongs to the MnmG family.</text>
</comment>
<proteinExistence type="inferred from homology"/>
<gene>
    <name evidence="1" type="primary">mnmG</name>
    <name evidence="1" type="synonym">gidA</name>
    <name type="ordered locus">ECIAI1_3925</name>
</gene>
<accession>B7M597</accession>
<keyword id="KW-0963">Cytoplasm</keyword>
<keyword id="KW-0274">FAD</keyword>
<keyword id="KW-0285">Flavoprotein</keyword>
<keyword id="KW-0520">NAD</keyword>
<keyword id="KW-0819">tRNA processing</keyword>
<dbReference type="EMBL" id="CU928160">
    <property type="protein sequence ID" value="CAR00719.1"/>
    <property type="molecule type" value="Genomic_DNA"/>
</dbReference>
<dbReference type="RefSeq" id="WP_000499788.1">
    <property type="nucleotide sequence ID" value="NC_011741.1"/>
</dbReference>
<dbReference type="SMR" id="B7M597"/>
<dbReference type="GeneID" id="75205459"/>
<dbReference type="KEGG" id="ecr:ECIAI1_3925"/>
<dbReference type="HOGENOM" id="CLU_007831_2_2_6"/>
<dbReference type="GO" id="GO:0005829">
    <property type="term" value="C:cytosol"/>
    <property type="evidence" value="ECO:0007669"/>
    <property type="project" value="TreeGrafter"/>
</dbReference>
<dbReference type="GO" id="GO:0050660">
    <property type="term" value="F:flavin adenine dinucleotide binding"/>
    <property type="evidence" value="ECO:0007669"/>
    <property type="project" value="UniProtKB-UniRule"/>
</dbReference>
<dbReference type="GO" id="GO:0030488">
    <property type="term" value="P:tRNA methylation"/>
    <property type="evidence" value="ECO:0007669"/>
    <property type="project" value="TreeGrafter"/>
</dbReference>
<dbReference type="GO" id="GO:0002098">
    <property type="term" value="P:tRNA wobble uridine modification"/>
    <property type="evidence" value="ECO:0007669"/>
    <property type="project" value="InterPro"/>
</dbReference>
<dbReference type="FunFam" id="1.10.10.1800:FF:000001">
    <property type="entry name" value="tRNA uridine 5-carboxymethylaminomethyl modification enzyme MnmG"/>
    <property type="match status" value="1"/>
</dbReference>
<dbReference type="FunFam" id="1.10.150.570:FF:000001">
    <property type="entry name" value="tRNA uridine 5-carboxymethylaminomethyl modification enzyme MnmG"/>
    <property type="match status" value="1"/>
</dbReference>
<dbReference type="FunFam" id="3.50.50.60:FF:000002">
    <property type="entry name" value="tRNA uridine 5-carboxymethylaminomethyl modification enzyme MnmG"/>
    <property type="match status" value="1"/>
</dbReference>
<dbReference type="FunFam" id="3.50.50.60:FF:000010">
    <property type="entry name" value="tRNA uridine 5-carboxymethylaminomethyl modification enzyme MnmG"/>
    <property type="match status" value="1"/>
</dbReference>
<dbReference type="Gene3D" id="3.50.50.60">
    <property type="entry name" value="FAD/NAD(P)-binding domain"/>
    <property type="match status" value="2"/>
</dbReference>
<dbReference type="Gene3D" id="1.10.150.570">
    <property type="entry name" value="GidA associated domain, C-terminal subdomain"/>
    <property type="match status" value="1"/>
</dbReference>
<dbReference type="Gene3D" id="1.10.10.1800">
    <property type="entry name" value="tRNA uridine 5-carboxymethylaminomethyl modification enzyme MnmG/GidA"/>
    <property type="match status" value="1"/>
</dbReference>
<dbReference type="HAMAP" id="MF_00129">
    <property type="entry name" value="MnmG_GidA"/>
    <property type="match status" value="1"/>
</dbReference>
<dbReference type="InterPro" id="IPR036188">
    <property type="entry name" value="FAD/NAD-bd_sf"/>
</dbReference>
<dbReference type="InterPro" id="IPR049312">
    <property type="entry name" value="GIDA_C_N"/>
</dbReference>
<dbReference type="InterPro" id="IPR004416">
    <property type="entry name" value="MnmG"/>
</dbReference>
<dbReference type="InterPro" id="IPR002218">
    <property type="entry name" value="MnmG-rel"/>
</dbReference>
<dbReference type="InterPro" id="IPR020595">
    <property type="entry name" value="MnmG-rel_CS"/>
</dbReference>
<dbReference type="InterPro" id="IPR026904">
    <property type="entry name" value="MnmG_C"/>
</dbReference>
<dbReference type="InterPro" id="IPR047001">
    <property type="entry name" value="MnmG_C_subdom"/>
</dbReference>
<dbReference type="InterPro" id="IPR044920">
    <property type="entry name" value="MnmG_C_subdom_sf"/>
</dbReference>
<dbReference type="InterPro" id="IPR040131">
    <property type="entry name" value="MnmG_N"/>
</dbReference>
<dbReference type="NCBIfam" id="TIGR00136">
    <property type="entry name" value="mnmG_gidA"/>
    <property type="match status" value="1"/>
</dbReference>
<dbReference type="PANTHER" id="PTHR11806">
    <property type="entry name" value="GLUCOSE INHIBITED DIVISION PROTEIN A"/>
    <property type="match status" value="1"/>
</dbReference>
<dbReference type="PANTHER" id="PTHR11806:SF0">
    <property type="entry name" value="PROTEIN MTO1 HOMOLOG, MITOCHONDRIAL"/>
    <property type="match status" value="1"/>
</dbReference>
<dbReference type="Pfam" id="PF01134">
    <property type="entry name" value="GIDA"/>
    <property type="match status" value="1"/>
</dbReference>
<dbReference type="Pfam" id="PF21680">
    <property type="entry name" value="GIDA_C_1st"/>
    <property type="match status" value="1"/>
</dbReference>
<dbReference type="Pfam" id="PF13932">
    <property type="entry name" value="SAM_GIDA_C"/>
    <property type="match status" value="1"/>
</dbReference>
<dbReference type="SMART" id="SM01228">
    <property type="entry name" value="GIDA_assoc_3"/>
    <property type="match status" value="1"/>
</dbReference>
<dbReference type="SUPFAM" id="SSF51905">
    <property type="entry name" value="FAD/NAD(P)-binding domain"/>
    <property type="match status" value="1"/>
</dbReference>
<dbReference type="PROSITE" id="PS01280">
    <property type="entry name" value="GIDA_1"/>
    <property type="match status" value="1"/>
</dbReference>
<dbReference type="PROSITE" id="PS01281">
    <property type="entry name" value="GIDA_2"/>
    <property type="match status" value="1"/>
</dbReference>
<organism>
    <name type="scientific">Escherichia coli O8 (strain IAI1)</name>
    <dbReference type="NCBI Taxonomy" id="585034"/>
    <lineage>
        <taxon>Bacteria</taxon>
        <taxon>Pseudomonadati</taxon>
        <taxon>Pseudomonadota</taxon>
        <taxon>Gammaproteobacteria</taxon>
        <taxon>Enterobacterales</taxon>
        <taxon>Enterobacteriaceae</taxon>
        <taxon>Escherichia</taxon>
    </lineage>
</organism>
<reference key="1">
    <citation type="journal article" date="2009" name="PLoS Genet.">
        <title>Organised genome dynamics in the Escherichia coli species results in highly diverse adaptive paths.</title>
        <authorList>
            <person name="Touchon M."/>
            <person name="Hoede C."/>
            <person name="Tenaillon O."/>
            <person name="Barbe V."/>
            <person name="Baeriswyl S."/>
            <person name="Bidet P."/>
            <person name="Bingen E."/>
            <person name="Bonacorsi S."/>
            <person name="Bouchier C."/>
            <person name="Bouvet O."/>
            <person name="Calteau A."/>
            <person name="Chiapello H."/>
            <person name="Clermont O."/>
            <person name="Cruveiller S."/>
            <person name="Danchin A."/>
            <person name="Diard M."/>
            <person name="Dossat C."/>
            <person name="Karoui M.E."/>
            <person name="Frapy E."/>
            <person name="Garry L."/>
            <person name="Ghigo J.M."/>
            <person name="Gilles A.M."/>
            <person name="Johnson J."/>
            <person name="Le Bouguenec C."/>
            <person name="Lescat M."/>
            <person name="Mangenot S."/>
            <person name="Martinez-Jehanne V."/>
            <person name="Matic I."/>
            <person name="Nassif X."/>
            <person name="Oztas S."/>
            <person name="Petit M.A."/>
            <person name="Pichon C."/>
            <person name="Rouy Z."/>
            <person name="Ruf C.S."/>
            <person name="Schneider D."/>
            <person name="Tourret J."/>
            <person name="Vacherie B."/>
            <person name="Vallenet D."/>
            <person name="Medigue C."/>
            <person name="Rocha E.P.C."/>
            <person name="Denamur E."/>
        </authorList>
    </citation>
    <scope>NUCLEOTIDE SEQUENCE [LARGE SCALE GENOMIC DNA]</scope>
    <source>
        <strain>IAI1</strain>
    </source>
</reference>
<name>MNMG_ECO8A</name>
<evidence type="ECO:0000255" key="1">
    <source>
        <dbReference type="HAMAP-Rule" id="MF_00129"/>
    </source>
</evidence>